<sequence length="143" mass="16013">MFLGTYTPKLDDKGRLTLPAKFRDALAGGLMVTKSQDHSLAVYPRAEFEKLARRASQASRSNPEARAFLRNLAAATDEQHPDAQGRITLSADHRRYASLSKECVVIGSVDYLEIWDAAAWQEYQQAHEENFSAATDETLRDII</sequence>
<comment type="subunit">
    <text evidence="1">Forms oligomers.</text>
</comment>
<comment type="subcellular location">
    <subcellularLocation>
        <location evidence="1">Cytoplasm</location>
        <location evidence="1">Nucleoid</location>
    </subcellularLocation>
</comment>
<comment type="similarity">
    <text evidence="1">Belongs to the MraZ family.</text>
</comment>
<feature type="chain" id="PRO_1000062901" description="Transcriptional regulator MraZ">
    <location>
        <begin position="1"/>
        <end position="143"/>
    </location>
</feature>
<feature type="domain" description="SpoVT-AbrB 1" evidence="2">
    <location>
        <begin position="5"/>
        <end position="47"/>
    </location>
</feature>
<feature type="domain" description="SpoVT-AbrB 2" evidence="2">
    <location>
        <begin position="76"/>
        <end position="119"/>
    </location>
</feature>
<name>MRAZ_MYCSS</name>
<keyword id="KW-0963">Cytoplasm</keyword>
<keyword id="KW-0238">DNA-binding</keyword>
<keyword id="KW-0677">Repeat</keyword>
<keyword id="KW-0804">Transcription</keyword>
<keyword id="KW-0805">Transcription regulation</keyword>
<evidence type="ECO:0000255" key="1">
    <source>
        <dbReference type="HAMAP-Rule" id="MF_01008"/>
    </source>
</evidence>
<evidence type="ECO:0000255" key="2">
    <source>
        <dbReference type="PROSITE-ProRule" id="PRU01076"/>
    </source>
</evidence>
<organism>
    <name type="scientific">Mycobacterium sp. (strain MCS)</name>
    <dbReference type="NCBI Taxonomy" id="164756"/>
    <lineage>
        <taxon>Bacteria</taxon>
        <taxon>Bacillati</taxon>
        <taxon>Actinomycetota</taxon>
        <taxon>Actinomycetes</taxon>
        <taxon>Mycobacteriales</taxon>
        <taxon>Mycobacteriaceae</taxon>
        <taxon>Mycobacterium</taxon>
    </lineage>
</organism>
<dbReference type="EMBL" id="CP000384">
    <property type="protein sequence ID" value="ABG09372.1"/>
    <property type="molecule type" value="Genomic_DNA"/>
</dbReference>
<dbReference type="SMR" id="Q1B6W2"/>
<dbReference type="KEGG" id="mmc:Mmcs_3265"/>
<dbReference type="HOGENOM" id="CLU_107907_0_5_11"/>
<dbReference type="BioCyc" id="MSP164756:G1G6O-3331-MONOMER"/>
<dbReference type="GO" id="GO:0005737">
    <property type="term" value="C:cytoplasm"/>
    <property type="evidence" value="ECO:0007669"/>
    <property type="project" value="UniProtKB-UniRule"/>
</dbReference>
<dbReference type="GO" id="GO:0009295">
    <property type="term" value="C:nucleoid"/>
    <property type="evidence" value="ECO:0007669"/>
    <property type="project" value="UniProtKB-SubCell"/>
</dbReference>
<dbReference type="GO" id="GO:0003700">
    <property type="term" value="F:DNA-binding transcription factor activity"/>
    <property type="evidence" value="ECO:0007669"/>
    <property type="project" value="UniProtKB-UniRule"/>
</dbReference>
<dbReference type="GO" id="GO:0000976">
    <property type="term" value="F:transcription cis-regulatory region binding"/>
    <property type="evidence" value="ECO:0007669"/>
    <property type="project" value="TreeGrafter"/>
</dbReference>
<dbReference type="GO" id="GO:2000143">
    <property type="term" value="P:negative regulation of DNA-templated transcription initiation"/>
    <property type="evidence" value="ECO:0007669"/>
    <property type="project" value="TreeGrafter"/>
</dbReference>
<dbReference type="CDD" id="cd16321">
    <property type="entry name" value="MraZ_C"/>
    <property type="match status" value="1"/>
</dbReference>
<dbReference type="CDD" id="cd16320">
    <property type="entry name" value="MraZ_N"/>
    <property type="match status" value="1"/>
</dbReference>
<dbReference type="Gene3D" id="3.40.1550.20">
    <property type="entry name" value="Transcriptional regulator MraZ domain"/>
    <property type="match status" value="1"/>
</dbReference>
<dbReference type="HAMAP" id="MF_01008">
    <property type="entry name" value="MraZ"/>
    <property type="match status" value="1"/>
</dbReference>
<dbReference type="InterPro" id="IPR003444">
    <property type="entry name" value="MraZ"/>
</dbReference>
<dbReference type="InterPro" id="IPR035644">
    <property type="entry name" value="MraZ_C"/>
</dbReference>
<dbReference type="InterPro" id="IPR020603">
    <property type="entry name" value="MraZ_dom"/>
</dbReference>
<dbReference type="InterPro" id="IPR035642">
    <property type="entry name" value="MraZ_N"/>
</dbReference>
<dbReference type="InterPro" id="IPR038619">
    <property type="entry name" value="MraZ_sf"/>
</dbReference>
<dbReference type="InterPro" id="IPR007159">
    <property type="entry name" value="SpoVT-AbrB_dom"/>
</dbReference>
<dbReference type="InterPro" id="IPR037914">
    <property type="entry name" value="SpoVT-AbrB_sf"/>
</dbReference>
<dbReference type="NCBIfam" id="TIGR00242">
    <property type="entry name" value="division/cell wall cluster transcriptional repressor MraZ"/>
    <property type="match status" value="1"/>
</dbReference>
<dbReference type="PANTHER" id="PTHR34701">
    <property type="entry name" value="TRANSCRIPTIONAL REGULATOR MRAZ"/>
    <property type="match status" value="1"/>
</dbReference>
<dbReference type="PANTHER" id="PTHR34701:SF1">
    <property type="entry name" value="TRANSCRIPTIONAL REGULATOR MRAZ"/>
    <property type="match status" value="1"/>
</dbReference>
<dbReference type="Pfam" id="PF02381">
    <property type="entry name" value="MraZ"/>
    <property type="match status" value="2"/>
</dbReference>
<dbReference type="SUPFAM" id="SSF89447">
    <property type="entry name" value="AbrB/MazE/MraZ-like"/>
    <property type="match status" value="1"/>
</dbReference>
<dbReference type="PROSITE" id="PS51740">
    <property type="entry name" value="SPOVT_ABRB"/>
    <property type="match status" value="2"/>
</dbReference>
<protein>
    <recommendedName>
        <fullName>Transcriptional regulator MraZ</fullName>
    </recommendedName>
</protein>
<accession>Q1B6W2</accession>
<reference key="1">
    <citation type="submission" date="2006-06" db="EMBL/GenBank/DDBJ databases">
        <title>Complete sequence of chromosome of Mycobacterium sp. MCS.</title>
        <authorList>
            <consortium name="US DOE Joint Genome Institute"/>
            <person name="Copeland A."/>
            <person name="Lucas S."/>
            <person name="Lapidus A."/>
            <person name="Barry K."/>
            <person name="Detter J.C."/>
            <person name="Glavina del Rio T."/>
            <person name="Hammon N."/>
            <person name="Israni S."/>
            <person name="Dalin E."/>
            <person name="Tice H."/>
            <person name="Pitluck S."/>
            <person name="Martinez M."/>
            <person name="Schmutz J."/>
            <person name="Larimer F."/>
            <person name="Land M."/>
            <person name="Hauser L."/>
            <person name="Kyrpides N."/>
            <person name="Kim E."/>
            <person name="Miller C.D."/>
            <person name="Hughes J.E."/>
            <person name="Anderson A.J."/>
            <person name="Sims R.C."/>
            <person name="Richardson P."/>
        </authorList>
    </citation>
    <scope>NUCLEOTIDE SEQUENCE [LARGE SCALE GENOMIC DNA]</scope>
    <source>
        <strain>MCS</strain>
    </source>
</reference>
<gene>
    <name evidence="1" type="primary">mraZ</name>
    <name type="ordered locus">Mmcs_3265</name>
</gene>
<proteinExistence type="inferred from homology"/>